<evidence type="ECO:0000255" key="1">
    <source>
        <dbReference type="HAMAP-Rule" id="MF_00421"/>
    </source>
</evidence>
<reference key="1">
    <citation type="journal article" date="2007" name="J. Bacteriol.">
        <title>The complete genome sequence of Bacillus thuringiensis Al Hakam.</title>
        <authorList>
            <person name="Challacombe J.F."/>
            <person name="Altherr M.R."/>
            <person name="Xie G."/>
            <person name="Bhotika S.S."/>
            <person name="Brown N."/>
            <person name="Bruce D."/>
            <person name="Campbell C.S."/>
            <person name="Campbell M.L."/>
            <person name="Chen J."/>
            <person name="Chertkov O."/>
            <person name="Cleland C."/>
            <person name="Dimitrijevic M."/>
            <person name="Doggett N.A."/>
            <person name="Fawcett J.J."/>
            <person name="Glavina T."/>
            <person name="Goodwin L.A."/>
            <person name="Green L.D."/>
            <person name="Han C.S."/>
            <person name="Hill K.K."/>
            <person name="Hitchcock P."/>
            <person name="Jackson P.J."/>
            <person name="Keim P."/>
            <person name="Kewalramani A.R."/>
            <person name="Longmire J."/>
            <person name="Lucas S."/>
            <person name="Malfatti S."/>
            <person name="Martinez D."/>
            <person name="McMurry K."/>
            <person name="Meincke L.J."/>
            <person name="Misra M."/>
            <person name="Moseman B.L."/>
            <person name="Mundt M."/>
            <person name="Munk A.C."/>
            <person name="Okinaka R.T."/>
            <person name="Parson-Quintana B."/>
            <person name="Reilly L.P."/>
            <person name="Richardson P."/>
            <person name="Robinson D.L."/>
            <person name="Saunders E."/>
            <person name="Tapia R."/>
            <person name="Tesmer J.G."/>
            <person name="Thayer N."/>
            <person name="Thompson L.S."/>
            <person name="Tice H."/>
            <person name="Ticknor L.O."/>
            <person name="Wills P.L."/>
            <person name="Gilna P."/>
            <person name="Brettin T.S."/>
        </authorList>
    </citation>
    <scope>NUCLEOTIDE SEQUENCE [LARGE SCALE GENOMIC DNA]</scope>
    <source>
        <strain>Al Hakam</strain>
    </source>
</reference>
<gene>
    <name evidence="1" type="primary">purQ</name>
    <name type="ordered locus">BALH_0287</name>
</gene>
<comment type="function">
    <text evidence="1">Part of the phosphoribosylformylglycinamidine synthase complex involved in the purines biosynthetic pathway. Catalyzes the ATP-dependent conversion of formylglycinamide ribonucleotide (FGAR) and glutamine to yield formylglycinamidine ribonucleotide (FGAM) and glutamate. The FGAM synthase complex is composed of three subunits. PurQ produces an ammonia molecule by converting glutamine to glutamate. PurL transfers the ammonia molecule to FGAR to form FGAM in an ATP-dependent manner. PurS interacts with PurQ and PurL and is thought to assist in the transfer of the ammonia molecule from PurQ to PurL.</text>
</comment>
<comment type="catalytic activity">
    <reaction evidence="1">
        <text>N(2)-formyl-N(1)-(5-phospho-beta-D-ribosyl)glycinamide + L-glutamine + ATP + H2O = 2-formamido-N(1)-(5-O-phospho-beta-D-ribosyl)acetamidine + L-glutamate + ADP + phosphate + H(+)</text>
        <dbReference type="Rhea" id="RHEA:17129"/>
        <dbReference type="ChEBI" id="CHEBI:15377"/>
        <dbReference type="ChEBI" id="CHEBI:15378"/>
        <dbReference type="ChEBI" id="CHEBI:29985"/>
        <dbReference type="ChEBI" id="CHEBI:30616"/>
        <dbReference type="ChEBI" id="CHEBI:43474"/>
        <dbReference type="ChEBI" id="CHEBI:58359"/>
        <dbReference type="ChEBI" id="CHEBI:147286"/>
        <dbReference type="ChEBI" id="CHEBI:147287"/>
        <dbReference type="ChEBI" id="CHEBI:456216"/>
        <dbReference type="EC" id="6.3.5.3"/>
    </reaction>
</comment>
<comment type="catalytic activity">
    <reaction evidence="1">
        <text>L-glutamine + H2O = L-glutamate + NH4(+)</text>
        <dbReference type="Rhea" id="RHEA:15889"/>
        <dbReference type="ChEBI" id="CHEBI:15377"/>
        <dbReference type="ChEBI" id="CHEBI:28938"/>
        <dbReference type="ChEBI" id="CHEBI:29985"/>
        <dbReference type="ChEBI" id="CHEBI:58359"/>
        <dbReference type="EC" id="3.5.1.2"/>
    </reaction>
</comment>
<comment type="pathway">
    <text evidence="1">Purine metabolism; IMP biosynthesis via de novo pathway; 5-amino-1-(5-phospho-D-ribosyl)imidazole from N(2)-formyl-N(1)-(5-phospho-D-ribosyl)glycinamide: step 1/2.</text>
</comment>
<comment type="subunit">
    <text evidence="1">Part of the FGAM synthase complex composed of 1 PurL, 1 PurQ and 2 PurS subunits.</text>
</comment>
<comment type="subcellular location">
    <subcellularLocation>
        <location evidence="1">Cytoplasm</location>
    </subcellularLocation>
</comment>
<keyword id="KW-0067">ATP-binding</keyword>
<keyword id="KW-0963">Cytoplasm</keyword>
<keyword id="KW-0315">Glutamine amidotransferase</keyword>
<keyword id="KW-0378">Hydrolase</keyword>
<keyword id="KW-0436">Ligase</keyword>
<keyword id="KW-0547">Nucleotide-binding</keyword>
<keyword id="KW-0658">Purine biosynthesis</keyword>
<sequence length="227" mass="25425">MKFAVIVFPGSNCDVDMFHAIKDELGEEVDYVWHDTENLDEYDAILLPGGFSYGDYLRCGAISRFANAMKAVQKAAEQGKPILGVCNGFQILVESGLLPGALMRNENLKFMCRTVQLRVENNETMFTSQYEKDEIINIPIAHGEGNYYCDEETLKQLEENNQIAFRYVENPNGSVSDIAGIVNEKGNVLGMMPHPERAVDELLGGAEGLKVFQSILKQWRETYVVNA</sequence>
<dbReference type="EC" id="6.3.5.3" evidence="1"/>
<dbReference type="EC" id="3.5.1.2" evidence="1"/>
<dbReference type="EMBL" id="CP000485">
    <property type="protein sequence ID" value="ABK83688.1"/>
    <property type="molecule type" value="Genomic_DNA"/>
</dbReference>
<dbReference type="RefSeq" id="WP_000666777.1">
    <property type="nucleotide sequence ID" value="NC_008600.1"/>
</dbReference>
<dbReference type="SMR" id="A0R8Z5"/>
<dbReference type="KEGG" id="btl:BALH_0287"/>
<dbReference type="HOGENOM" id="CLU_001031_3_1_9"/>
<dbReference type="UniPathway" id="UPA00074">
    <property type="reaction ID" value="UER00128"/>
</dbReference>
<dbReference type="GO" id="GO:0005737">
    <property type="term" value="C:cytoplasm"/>
    <property type="evidence" value="ECO:0007669"/>
    <property type="project" value="UniProtKB-SubCell"/>
</dbReference>
<dbReference type="GO" id="GO:0005524">
    <property type="term" value="F:ATP binding"/>
    <property type="evidence" value="ECO:0007669"/>
    <property type="project" value="UniProtKB-KW"/>
</dbReference>
<dbReference type="GO" id="GO:0004359">
    <property type="term" value="F:glutaminase activity"/>
    <property type="evidence" value="ECO:0007669"/>
    <property type="project" value="UniProtKB-EC"/>
</dbReference>
<dbReference type="GO" id="GO:0004642">
    <property type="term" value="F:phosphoribosylformylglycinamidine synthase activity"/>
    <property type="evidence" value="ECO:0007669"/>
    <property type="project" value="UniProtKB-UniRule"/>
</dbReference>
<dbReference type="GO" id="GO:0006189">
    <property type="term" value="P:'de novo' IMP biosynthetic process"/>
    <property type="evidence" value="ECO:0007669"/>
    <property type="project" value="UniProtKB-UniRule"/>
</dbReference>
<dbReference type="CDD" id="cd01740">
    <property type="entry name" value="GATase1_FGAR_AT"/>
    <property type="match status" value="1"/>
</dbReference>
<dbReference type="FunFam" id="3.40.50.880:FF:000019">
    <property type="entry name" value="Phosphoribosylformylglycinamidine synthase subunit PurQ"/>
    <property type="match status" value="1"/>
</dbReference>
<dbReference type="Gene3D" id="3.40.50.880">
    <property type="match status" value="1"/>
</dbReference>
<dbReference type="HAMAP" id="MF_00421">
    <property type="entry name" value="PurQ"/>
    <property type="match status" value="1"/>
</dbReference>
<dbReference type="InterPro" id="IPR029062">
    <property type="entry name" value="Class_I_gatase-like"/>
</dbReference>
<dbReference type="InterPro" id="IPR010075">
    <property type="entry name" value="PRibForGlyAmidine_synth_PurQ"/>
</dbReference>
<dbReference type="NCBIfam" id="TIGR01737">
    <property type="entry name" value="FGAM_synth_I"/>
    <property type="match status" value="1"/>
</dbReference>
<dbReference type="NCBIfam" id="NF002957">
    <property type="entry name" value="PRK03619.1"/>
    <property type="match status" value="1"/>
</dbReference>
<dbReference type="PANTHER" id="PTHR47552">
    <property type="entry name" value="PHOSPHORIBOSYLFORMYLGLYCINAMIDINE SYNTHASE SUBUNIT PURQ"/>
    <property type="match status" value="1"/>
</dbReference>
<dbReference type="PANTHER" id="PTHR47552:SF1">
    <property type="entry name" value="PHOSPHORIBOSYLFORMYLGLYCINAMIDINE SYNTHASE SUBUNIT PURQ"/>
    <property type="match status" value="1"/>
</dbReference>
<dbReference type="Pfam" id="PF13507">
    <property type="entry name" value="GATase_5"/>
    <property type="match status" value="1"/>
</dbReference>
<dbReference type="PIRSF" id="PIRSF001586">
    <property type="entry name" value="FGAM_synth_I"/>
    <property type="match status" value="1"/>
</dbReference>
<dbReference type="SMART" id="SM01211">
    <property type="entry name" value="GATase_5"/>
    <property type="match status" value="1"/>
</dbReference>
<dbReference type="SUPFAM" id="SSF52317">
    <property type="entry name" value="Class I glutamine amidotransferase-like"/>
    <property type="match status" value="1"/>
</dbReference>
<dbReference type="PROSITE" id="PS51273">
    <property type="entry name" value="GATASE_TYPE_1"/>
    <property type="match status" value="1"/>
</dbReference>
<name>PURQ_BACAH</name>
<protein>
    <recommendedName>
        <fullName evidence="1">Phosphoribosylformylglycinamidine synthase subunit PurQ</fullName>
        <shortName evidence="1">FGAM synthase</shortName>
        <ecNumber evidence="1">6.3.5.3</ecNumber>
    </recommendedName>
    <alternativeName>
        <fullName evidence="1">Formylglycinamide ribonucleotide amidotransferase subunit I</fullName>
        <shortName evidence="1">FGAR amidotransferase I</shortName>
        <shortName evidence="1">FGAR-AT I</shortName>
    </alternativeName>
    <alternativeName>
        <fullName evidence="1">Glutaminase PurQ</fullName>
        <ecNumber evidence="1">3.5.1.2</ecNumber>
    </alternativeName>
    <alternativeName>
        <fullName evidence="1">Phosphoribosylformylglycinamidine synthase subunit I</fullName>
    </alternativeName>
</protein>
<organism>
    <name type="scientific">Bacillus thuringiensis (strain Al Hakam)</name>
    <dbReference type="NCBI Taxonomy" id="412694"/>
    <lineage>
        <taxon>Bacteria</taxon>
        <taxon>Bacillati</taxon>
        <taxon>Bacillota</taxon>
        <taxon>Bacilli</taxon>
        <taxon>Bacillales</taxon>
        <taxon>Bacillaceae</taxon>
        <taxon>Bacillus</taxon>
        <taxon>Bacillus cereus group</taxon>
    </lineage>
</organism>
<proteinExistence type="inferred from homology"/>
<feature type="chain" id="PRO_1000194850" description="Phosphoribosylformylglycinamidine synthase subunit PurQ">
    <location>
        <begin position="1"/>
        <end position="227"/>
    </location>
</feature>
<feature type="domain" description="Glutamine amidotransferase type-1" evidence="1">
    <location>
        <begin position="3"/>
        <end position="225"/>
    </location>
</feature>
<feature type="active site" description="Nucleophile" evidence="1">
    <location>
        <position position="86"/>
    </location>
</feature>
<feature type="active site" evidence="1">
    <location>
        <position position="194"/>
    </location>
</feature>
<feature type="active site" evidence="1">
    <location>
        <position position="196"/>
    </location>
</feature>
<accession>A0R8Z5</accession>